<comment type="function">
    <text evidence="1">Bidirectionally degrades single-stranded DNA into large acid-insoluble oligonucleotides, which are then degraded further into small acid-soluble oligonucleotides.</text>
</comment>
<comment type="catalytic activity">
    <reaction evidence="1">
        <text>Exonucleolytic cleavage in either 5'- to 3'- or 3'- to 5'-direction to yield nucleoside 5'-phosphates.</text>
        <dbReference type="EC" id="3.1.11.6"/>
    </reaction>
</comment>
<comment type="subunit">
    <text evidence="1">Heterooligomer composed of large and small subunits.</text>
</comment>
<comment type="subcellular location">
    <subcellularLocation>
        <location evidence="1">Cytoplasm</location>
    </subcellularLocation>
</comment>
<comment type="similarity">
    <text evidence="1">Belongs to the XseA family.</text>
</comment>
<name>EX7L_SHESM</name>
<evidence type="ECO:0000255" key="1">
    <source>
        <dbReference type="HAMAP-Rule" id="MF_00378"/>
    </source>
</evidence>
<sequence length="448" mass="49960">MQVPKNNIYTVSRLNGEVRQILEGQLGKVWLNGEISNFSAPSSGHWYLTLKDHYSQIRCAMFKGRNQSVSFKPVNGQQVLVKGAISVYEPRGDYQLLIESMLPAGDGLLAQQFEALKMKLAAQGLFAADTKRQLPKNIQRIGVITSPSGAAIRDVLHVLARRDPSIEVIIYPTQVQGESADLNICQAINIANQRLEVDVLLLTRGGGSLEDLWCFNSEALAHTIYNSALPVVSAVGHEVDTTISDYVADVRAPTPSAGAELLSQDSDNKSQRLATVLSRLKQSASHYQLKQERRLSLLEHRLQRLDPKRTLQQFEQRFDEMQLRLEAALSNKLHGLSRRQQQLASRLEQQSPKHKLALETNRLSYLATRLQDAMQDTLNQSEQRVKYAAHQLETVSPLATLSRGYSITTDANHQVIDNAAQLSVGDKINTRLRHGQVQSTVTQITDES</sequence>
<accession>Q0HKV4</accession>
<proteinExistence type="inferred from homology"/>
<gene>
    <name evidence="1" type="primary">xseA</name>
    <name type="ordered locus">Shewmr4_1233</name>
</gene>
<reference key="1">
    <citation type="submission" date="2006-08" db="EMBL/GenBank/DDBJ databases">
        <title>Complete sequence of Shewanella sp. MR-4.</title>
        <authorList>
            <consortium name="US DOE Joint Genome Institute"/>
            <person name="Copeland A."/>
            <person name="Lucas S."/>
            <person name="Lapidus A."/>
            <person name="Barry K."/>
            <person name="Detter J.C."/>
            <person name="Glavina del Rio T."/>
            <person name="Hammon N."/>
            <person name="Israni S."/>
            <person name="Dalin E."/>
            <person name="Tice H."/>
            <person name="Pitluck S."/>
            <person name="Kiss H."/>
            <person name="Brettin T."/>
            <person name="Bruce D."/>
            <person name="Han C."/>
            <person name="Tapia R."/>
            <person name="Gilna P."/>
            <person name="Schmutz J."/>
            <person name="Larimer F."/>
            <person name="Land M."/>
            <person name="Hauser L."/>
            <person name="Kyrpides N."/>
            <person name="Mikhailova N."/>
            <person name="Nealson K."/>
            <person name="Konstantinidis K."/>
            <person name="Klappenbach J."/>
            <person name="Tiedje J."/>
            <person name="Richardson P."/>
        </authorList>
    </citation>
    <scope>NUCLEOTIDE SEQUENCE [LARGE SCALE GENOMIC DNA]</scope>
    <source>
        <strain>MR-4</strain>
    </source>
</reference>
<dbReference type="EC" id="3.1.11.6" evidence="1"/>
<dbReference type="EMBL" id="CP000446">
    <property type="protein sequence ID" value="ABI38313.1"/>
    <property type="molecule type" value="Genomic_DNA"/>
</dbReference>
<dbReference type="RefSeq" id="WP_011622021.1">
    <property type="nucleotide sequence ID" value="NC_008321.1"/>
</dbReference>
<dbReference type="SMR" id="Q0HKV4"/>
<dbReference type="KEGG" id="she:Shewmr4_1233"/>
<dbReference type="HOGENOM" id="CLU_023625_3_1_6"/>
<dbReference type="GO" id="GO:0005737">
    <property type="term" value="C:cytoplasm"/>
    <property type="evidence" value="ECO:0007669"/>
    <property type="project" value="UniProtKB-SubCell"/>
</dbReference>
<dbReference type="GO" id="GO:0009318">
    <property type="term" value="C:exodeoxyribonuclease VII complex"/>
    <property type="evidence" value="ECO:0007669"/>
    <property type="project" value="InterPro"/>
</dbReference>
<dbReference type="GO" id="GO:0008855">
    <property type="term" value="F:exodeoxyribonuclease VII activity"/>
    <property type="evidence" value="ECO:0007669"/>
    <property type="project" value="UniProtKB-UniRule"/>
</dbReference>
<dbReference type="GO" id="GO:0003676">
    <property type="term" value="F:nucleic acid binding"/>
    <property type="evidence" value="ECO:0007669"/>
    <property type="project" value="InterPro"/>
</dbReference>
<dbReference type="GO" id="GO:0006308">
    <property type="term" value="P:DNA catabolic process"/>
    <property type="evidence" value="ECO:0007669"/>
    <property type="project" value="UniProtKB-UniRule"/>
</dbReference>
<dbReference type="CDD" id="cd04489">
    <property type="entry name" value="ExoVII_LU_OBF"/>
    <property type="match status" value="1"/>
</dbReference>
<dbReference type="HAMAP" id="MF_00378">
    <property type="entry name" value="Exonuc_7_L"/>
    <property type="match status" value="1"/>
</dbReference>
<dbReference type="InterPro" id="IPR003753">
    <property type="entry name" value="Exonuc_VII_L"/>
</dbReference>
<dbReference type="InterPro" id="IPR020579">
    <property type="entry name" value="Exonuc_VII_lsu_C"/>
</dbReference>
<dbReference type="InterPro" id="IPR025824">
    <property type="entry name" value="OB-fold_nuc-bd_dom"/>
</dbReference>
<dbReference type="NCBIfam" id="TIGR00237">
    <property type="entry name" value="xseA"/>
    <property type="match status" value="1"/>
</dbReference>
<dbReference type="PANTHER" id="PTHR30008">
    <property type="entry name" value="EXODEOXYRIBONUCLEASE 7 LARGE SUBUNIT"/>
    <property type="match status" value="1"/>
</dbReference>
<dbReference type="PANTHER" id="PTHR30008:SF0">
    <property type="entry name" value="EXODEOXYRIBONUCLEASE 7 LARGE SUBUNIT"/>
    <property type="match status" value="1"/>
</dbReference>
<dbReference type="Pfam" id="PF02601">
    <property type="entry name" value="Exonuc_VII_L"/>
    <property type="match status" value="1"/>
</dbReference>
<dbReference type="Pfam" id="PF13742">
    <property type="entry name" value="tRNA_anti_2"/>
    <property type="match status" value="1"/>
</dbReference>
<keyword id="KW-0963">Cytoplasm</keyword>
<keyword id="KW-0269">Exonuclease</keyword>
<keyword id="KW-0378">Hydrolase</keyword>
<keyword id="KW-0540">Nuclease</keyword>
<feature type="chain" id="PRO_0000273686" description="Exodeoxyribonuclease 7 large subunit">
    <location>
        <begin position="1"/>
        <end position="448"/>
    </location>
</feature>
<protein>
    <recommendedName>
        <fullName evidence="1">Exodeoxyribonuclease 7 large subunit</fullName>
        <ecNumber evidence="1">3.1.11.6</ecNumber>
    </recommendedName>
    <alternativeName>
        <fullName evidence="1">Exodeoxyribonuclease VII large subunit</fullName>
        <shortName evidence="1">Exonuclease VII large subunit</shortName>
    </alternativeName>
</protein>
<organism>
    <name type="scientific">Shewanella sp. (strain MR-4)</name>
    <dbReference type="NCBI Taxonomy" id="60480"/>
    <lineage>
        <taxon>Bacteria</taxon>
        <taxon>Pseudomonadati</taxon>
        <taxon>Pseudomonadota</taxon>
        <taxon>Gammaproteobacteria</taxon>
        <taxon>Alteromonadales</taxon>
        <taxon>Shewanellaceae</taxon>
        <taxon>Shewanella</taxon>
    </lineage>
</organism>